<evidence type="ECO:0000255" key="1">
    <source>
        <dbReference type="HAMAP-Rule" id="MF_00126"/>
    </source>
</evidence>
<comment type="catalytic activity">
    <reaction evidence="1">
        <text>tRNA(Gln) + L-glutamine + ATP = L-glutaminyl-tRNA(Gln) + AMP + diphosphate</text>
        <dbReference type="Rhea" id="RHEA:20121"/>
        <dbReference type="Rhea" id="RHEA-COMP:9662"/>
        <dbReference type="Rhea" id="RHEA-COMP:9681"/>
        <dbReference type="ChEBI" id="CHEBI:30616"/>
        <dbReference type="ChEBI" id="CHEBI:33019"/>
        <dbReference type="ChEBI" id="CHEBI:58359"/>
        <dbReference type="ChEBI" id="CHEBI:78442"/>
        <dbReference type="ChEBI" id="CHEBI:78521"/>
        <dbReference type="ChEBI" id="CHEBI:456215"/>
        <dbReference type="EC" id="6.1.1.18"/>
    </reaction>
</comment>
<comment type="subunit">
    <text evidence="1">Monomer.</text>
</comment>
<comment type="subcellular location">
    <subcellularLocation>
        <location evidence="1">Cytoplasm</location>
    </subcellularLocation>
</comment>
<comment type="similarity">
    <text evidence="1">Belongs to the class-I aminoacyl-tRNA synthetase family.</text>
</comment>
<proteinExistence type="inferred from homology"/>
<name>SYQ_SALNS</name>
<reference key="1">
    <citation type="journal article" date="2011" name="J. Bacteriol.">
        <title>Comparative genomics of 28 Salmonella enterica isolates: evidence for CRISPR-mediated adaptive sublineage evolution.</title>
        <authorList>
            <person name="Fricke W.F."/>
            <person name="Mammel M.K."/>
            <person name="McDermott P.F."/>
            <person name="Tartera C."/>
            <person name="White D.G."/>
            <person name="Leclerc J.E."/>
            <person name="Ravel J."/>
            <person name="Cebula T.A."/>
        </authorList>
    </citation>
    <scope>NUCLEOTIDE SEQUENCE [LARGE SCALE GENOMIC DNA]</scope>
    <source>
        <strain>SL254</strain>
    </source>
</reference>
<accession>B4SYN9</accession>
<keyword id="KW-0030">Aminoacyl-tRNA synthetase</keyword>
<keyword id="KW-0067">ATP-binding</keyword>
<keyword id="KW-0963">Cytoplasm</keyword>
<keyword id="KW-0436">Ligase</keyword>
<keyword id="KW-0547">Nucleotide-binding</keyword>
<keyword id="KW-0648">Protein biosynthesis</keyword>
<sequence>MSEAEARPTNFIRQIIDEDLASGKHTTVHTRFPPEPNGYLHIGHAKSICLNFGIAQDYQGQCNLRFDDTNPVKEDIEYVDSIKNDVEWLGFHWSGDIRYSSDYFDQLHAYAVELINKGLAYVDELTPEQIREYRGTLTAPGKNSPFRDRSVEENLALFEKMRTGGFEEGKACLRAKIDMASPFIVMRDPVLYRIKFAEHHQTGNKWCIYPMYDFTHCISDALEGITHSLCTLEFQDNRRLYDWVLDNITIPVHPRQYEFSRLNLEYTVMSKRKLNLLVTDKHVEGWDDPRMPTISGLRRRGYTAASIREFCKRIGVTKQDNTIEMASLESCIREDLNENAPRAMAVIDPVKLVIENYPQGESEMVTMPNHPNKPEMGSREVPFSGEIWIDRADFREEANKQYKRLVMGKEVRLRNAYVIKAERVEKDAEGNITTIFCTYDADTLSKDPADGRKVKGVIHWVSAAHALPIEIRLYDRLFSVPNPGAAEDFLSVINPESLVIKRGYGEPSLKAAVAGKAFQFEREGYFCLDSRYATADKLVFNRTVGLRDTWAKAGE</sequence>
<feature type="chain" id="PRO_1000095513" description="Glutamine--tRNA ligase">
    <location>
        <begin position="1"/>
        <end position="555"/>
    </location>
</feature>
<feature type="region of interest" description="Interaction with tRNA" evidence="1">
    <location>
        <begin position="317"/>
        <end position="324"/>
    </location>
</feature>
<feature type="short sequence motif" description="'HIGH' region" evidence="1">
    <location>
        <begin position="34"/>
        <end position="44"/>
    </location>
</feature>
<feature type="short sequence motif" description="'KMSKS' region" evidence="1">
    <location>
        <begin position="268"/>
        <end position="272"/>
    </location>
</feature>
<feature type="binding site" evidence="1">
    <location>
        <begin position="35"/>
        <end position="37"/>
    </location>
    <ligand>
        <name>ATP</name>
        <dbReference type="ChEBI" id="CHEBI:30616"/>
    </ligand>
</feature>
<feature type="binding site" evidence="1">
    <location>
        <begin position="41"/>
        <end position="47"/>
    </location>
    <ligand>
        <name>ATP</name>
        <dbReference type="ChEBI" id="CHEBI:30616"/>
    </ligand>
</feature>
<feature type="binding site" evidence="1">
    <location>
        <position position="67"/>
    </location>
    <ligand>
        <name>L-glutamine</name>
        <dbReference type="ChEBI" id="CHEBI:58359"/>
    </ligand>
</feature>
<feature type="binding site" evidence="1">
    <location>
        <position position="212"/>
    </location>
    <ligand>
        <name>L-glutamine</name>
        <dbReference type="ChEBI" id="CHEBI:58359"/>
    </ligand>
</feature>
<feature type="binding site" evidence="1">
    <location>
        <position position="231"/>
    </location>
    <ligand>
        <name>ATP</name>
        <dbReference type="ChEBI" id="CHEBI:30616"/>
    </ligand>
</feature>
<feature type="binding site" evidence="1">
    <location>
        <begin position="261"/>
        <end position="262"/>
    </location>
    <ligand>
        <name>ATP</name>
        <dbReference type="ChEBI" id="CHEBI:30616"/>
    </ligand>
</feature>
<feature type="binding site" evidence="1">
    <location>
        <begin position="269"/>
        <end position="271"/>
    </location>
    <ligand>
        <name>ATP</name>
        <dbReference type="ChEBI" id="CHEBI:30616"/>
    </ligand>
</feature>
<gene>
    <name evidence="1" type="primary">glnS</name>
    <name type="ordered locus">SNSL254_A0745</name>
</gene>
<protein>
    <recommendedName>
        <fullName evidence="1">Glutamine--tRNA ligase</fullName>
        <ecNumber evidence="1">6.1.1.18</ecNumber>
    </recommendedName>
    <alternativeName>
        <fullName evidence="1">Glutaminyl-tRNA synthetase</fullName>
        <shortName evidence="1">GlnRS</shortName>
    </alternativeName>
</protein>
<dbReference type="EC" id="6.1.1.18" evidence="1"/>
<dbReference type="EMBL" id="CP001113">
    <property type="protein sequence ID" value="ACF65040.1"/>
    <property type="molecule type" value="Genomic_DNA"/>
</dbReference>
<dbReference type="RefSeq" id="WP_001287182.1">
    <property type="nucleotide sequence ID" value="NZ_CCMR01000003.1"/>
</dbReference>
<dbReference type="SMR" id="B4SYN9"/>
<dbReference type="KEGG" id="see:SNSL254_A0745"/>
<dbReference type="HOGENOM" id="CLU_001882_2_3_6"/>
<dbReference type="Proteomes" id="UP000008824">
    <property type="component" value="Chromosome"/>
</dbReference>
<dbReference type="GO" id="GO:0005829">
    <property type="term" value="C:cytosol"/>
    <property type="evidence" value="ECO:0007669"/>
    <property type="project" value="TreeGrafter"/>
</dbReference>
<dbReference type="GO" id="GO:0005524">
    <property type="term" value="F:ATP binding"/>
    <property type="evidence" value="ECO:0007669"/>
    <property type="project" value="UniProtKB-UniRule"/>
</dbReference>
<dbReference type="GO" id="GO:0004819">
    <property type="term" value="F:glutamine-tRNA ligase activity"/>
    <property type="evidence" value="ECO:0007669"/>
    <property type="project" value="UniProtKB-UniRule"/>
</dbReference>
<dbReference type="GO" id="GO:0006425">
    <property type="term" value="P:glutaminyl-tRNA aminoacylation"/>
    <property type="evidence" value="ECO:0007669"/>
    <property type="project" value="InterPro"/>
</dbReference>
<dbReference type="GO" id="GO:0006424">
    <property type="term" value="P:glutamyl-tRNA aminoacylation"/>
    <property type="evidence" value="ECO:0007669"/>
    <property type="project" value="UniProtKB-UniRule"/>
</dbReference>
<dbReference type="CDD" id="cd00807">
    <property type="entry name" value="GlnRS_core"/>
    <property type="match status" value="1"/>
</dbReference>
<dbReference type="FunFam" id="1.10.1160.10:FF:000001">
    <property type="entry name" value="Glutamine--tRNA ligase"/>
    <property type="match status" value="1"/>
</dbReference>
<dbReference type="FunFam" id="2.40.240.10:FF:000001">
    <property type="entry name" value="Glutamine--tRNA ligase"/>
    <property type="match status" value="1"/>
</dbReference>
<dbReference type="FunFam" id="2.40.240.10:FF:000003">
    <property type="entry name" value="Glutamine--tRNA ligase"/>
    <property type="match status" value="1"/>
</dbReference>
<dbReference type="FunFam" id="3.90.800.10:FF:000001">
    <property type="entry name" value="Glutamine--tRNA ligase"/>
    <property type="match status" value="1"/>
</dbReference>
<dbReference type="FunFam" id="3.40.50.620:FF:000037">
    <property type="entry name" value="Glutamine--tRNA ligase cytoplasmic"/>
    <property type="match status" value="1"/>
</dbReference>
<dbReference type="Gene3D" id="1.10.1160.10">
    <property type="entry name" value="Glutamyl-trna Synthetase, Domain 2"/>
    <property type="match status" value="1"/>
</dbReference>
<dbReference type="Gene3D" id="3.90.800.10">
    <property type="entry name" value="Glutamyl-tRNA Synthetase, Domain 3"/>
    <property type="match status" value="1"/>
</dbReference>
<dbReference type="Gene3D" id="3.40.50.620">
    <property type="entry name" value="HUPs"/>
    <property type="match status" value="1"/>
</dbReference>
<dbReference type="Gene3D" id="2.40.240.10">
    <property type="entry name" value="Ribosomal Protein L25, Chain P"/>
    <property type="match status" value="2"/>
</dbReference>
<dbReference type="HAMAP" id="MF_00126">
    <property type="entry name" value="Gln_tRNA_synth"/>
    <property type="match status" value="1"/>
</dbReference>
<dbReference type="InterPro" id="IPR001412">
    <property type="entry name" value="aa-tRNA-synth_I_CS"/>
</dbReference>
<dbReference type="InterPro" id="IPR004514">
    <property type="entry name" value="Gln-tRNA-synth"/>
</dbReference>
<dbReference type="InterPro" id="IPR050132">
    <property type="entry name" value="Gln/Glu-tRNA_Ligase"/>
</dbReference>
<dbReference type="InterPro" id="IPR022861">
    <property type="entry name" value="Gln_tRNA_ligase_bac"/>
</dbReference>
<dbReference type="InterPro" id="IPR000924">
    <property type="entry name" value="Glu/Gln-tRNA-synth"/>
</dbReference>
<dbReference type="InterPro" id="IPR020058">
    <property type="entry name" value="Glu/Gln-tRNA-synth_Ib_cat-dom"/>
</dbReference>
<dbReference type="InterPro" id="IPR020059">
    <property type="entry name" value="Glu/Gln-tRNA-synth_Ib_codon-bd"/>
</dbReference>
<dbReference type="InterPro" id="IPR020061">
    <property type="entry name" value="Glu_tRNA_lig_a-bdl"/>
</dbReference>
<dbReference type="InterPro" id="IPR020056">
    <property type="entry name" value="Rbsml_bL25/Gln-tRNA_synth_N"/>
</dbReference>
<dbReference type="InterPro" id="IPR011035">
    <property type="entry name" value="Ribosomal_bL25/Gln-tRNA_synth"/>
</dbReference>
<dbReference type="InterPro" id="IPR014729">
    <property type="entry name" value="Rossmann-like_a/b/a_fold"/>
</dbReference>
<dbReference type="InterPro" id="IPR049437">
    <property type="entry name" value="tRNA-synt_1c_C2"/>
</dbReference>
<dbReference type="NCBIfam" id="TIGR00440">
    <property type="entry name" value="glnS"/>
    <property type="match status" value="1"/>
</dbReference>
<dbReference type="NCBIfam" id="NF011291">
    <property type="entry name" value="PRK14703.1"/>
    <property type="match status" value="1"/>
</dbReference>
<dbReference type="PANTHER" id="PTHR43097:SF5">
    <property type="entry name" value="GLUTAMATE--TRNA LIGASE"/>
    <property type="match status" value="1"/>
</dbReference>
<dbReference type="PANTHER" id="PTHR43097">
    <property type="entry name" value="GLUTAMINE-TRNA LIGASE"/>
    <property type="match status" value="1"/>
</dbReference>
<dbReference type="Pfam" id="PF00749">
    <property type="entry name" value="tRNA-synt_1c"/>
    <property type="match status" value="1"/>
</dbReference>
<dbReference type="Pfam" id="PF03950">
    <property type="entry name" value="tRNA-synt_1c_C"/>
    <property type="match status" value="1"/>
</dbReference>
<dbReference type="Pfam" id="PF20974">
    <property type="entry name" value="tRNA-synt_1c_C2"/>
    <property type="match status" value="1"/>
</dbReference>
<dbReference type="PRINTS" id="PR00987">
    <property type="entry name" value="TRNASYNTHGLU"/>
</dbReference>
<dbReference type="SUPFAM" id="SSF52374">
    <property type="entry name" value="Nucleotidylyl transferase"/>
    <property type="match status" value="1"/>
</dbReference>
<dbReference type="SUPFAM" id="SSF50715">
    <property type="entry name" value="Ribosomal protein L25-like"/>
    <property type="match status" value="1"/>
</dbReference>
<dbReference type="PROSITE" id="PS00178">
    <property type="entry name" value="AA_TRNA_LIGASE_I"/>
    <property type="match status" value="1"/>
</dbReference>
<organism>
    <name type="scientific">Salmonella newport (strain SL254)</name>
    <dbReference type="NCBI Taxonomy" id="423368"/>
    <lineage>
        <taxon>Bacteria</taxon>
        <taxon>Pseudomonadati</taxon>
        <taxon>Pseudomonadota</taxon>
        <taxon>Gammaproteobacteria</taxon>
        <taxon>Enterobacterales</taxon>
        <taxon>Enterobacteriaceae</taxon>
        <taxon>Salmonella</taxon>
    </lineage>
</organism>